<evidence type="ECO:0000255" key="1">
    <source>
        <dbReference type="HAMAP-Rule" id="MF_00102"/>
    </source>
</evidence>
<evidence type="ECO:0000305" key="2"/>
<evidence type="ECO:0007829" key="3">
    <source>
        <dbReference type="PDB" id="4YWJ"/>
    </source>
</evidence>
<organism>
    <name type="scientific">Pseudomonas aeruginosa (strain ATCC 15692 / DSM 22644 / CIP 104116 / JCM 14847 / LMG 12228 / 1C / PRS 101 / PAO1)</name>
    <dbReference type="NCBI Taxonomy" id="208964"/>
    <lineage>
        <taxon>Bacteria</taxon>
        <taxon>Pseudomonadati</taxon>
        <taxon>Pseudomonadota</taxon>
        <taxon>Gammaproteobacteria</taxon>
        <taxon>Pseudomonadales</taxon>
        <taxon>Pseudomonadaceae</taxon>
        <taxon>Pseudomonas</taxon>
    </lineage>
</organism>
<comment type="function">
    <text evidence="1">Catalyzes the conversion of 4-hydroxy-tetrahydrodipicolinate (HTPA) to tetrahydrodipicolinate.</text>
</comment>
<comment type="catalytic activity">
    <reaction evidence="1">
        <text>(S)-2,3,4,5-tetrahydrodipicolinate + NAD(+) + H2O = (2S,4S)-4-hydroxy-2,3,4,5-tetrahydrodipicolinate + NADH + H(+)</text>
        <dbReference type="Rhea" id="RHEA:35323"/>
        <dbReference type="ChEBI" id="CHEBI:15377"/>
        <dbReference type="ChEBI" id="CHEBI:15378"/>
        <dbReference type="ChEBI" id="CHEBI:16845"/>
        <dbReference type="ChEBI" id="CHEBI:57540"/>
        <dbReference type="ChEBI" id="CHEBI:57945"/>
        <dbReference type="ChEBI" id="CHEBI:67139"/>
        <dbReference type="EC" id="1.17.1.8"/>
    </reaction>
</comment>
<comment type="catalytic activity">
    <reaction evidence="1">
        <text>(S)-2,3,4,5-tetrahydrodipicolinate + NADP(+) + H2O = (2S,4S)-4-hydroxy-2,3,4,5-tetrahydrodipicolinate + NADPH + H(+)</text>
        <dbReference type="Rhea" id="RHEA:35331"/>
        <dbReference type="ChEBI" id="CHEBI:15377"/>
        <dbReference type="ChEBI" id="CHEBI:15378"/>
        <dbReference type="ChEBI" id="CHEBI:16845"/>
        <dbReference type="ChEBI" id="CHEBI:57783"/>
        <dbReference type="ChEBI" id="CHEBI:58349"/>
        <dbReference type="ChEBI" id="CHEBI:67139"/>
        <dbReference type="EC" id="1.17.1.8"/>
    </reaction>
</comment>
<comment type="pathway">
    <text evidence="1">Amino-acid biosynthesis; L-lysine biosynthesis via DAP pathway; (S)-tetrahydrodipicolinate from L-aspartate: step 4/4.</text>
</comment>
<comment type="subcellular location">
    <subcellularLocation>
        <location evidence="1">Cytoplasm</location>
    </subcellularLocation>
</comment>
<comment type="similarity">
    <text evidence="1">Belongs to the DapB family.</text>
</comment>
<comment type="caution">
    <text evidence="2">Was originally thought to be a dihydrodipicolinate reductase (DHDPR), catalyzing the conversion of dihydrodipicolinate to tetrahydrodipicolinate. However, it was shown in E.coli that the substrate of the enzymatic reaction is not dihydrodipicolinate (DHDP) but in fact (2S,4S)-4-hydroxy-2,3,4,5-tetrahydrodipicolinic acid (HTPA), the product released by the DapA-catalyzed reaction.</text>
</comment>
<dbReference type="EC" id="1.17.1.8" evidence="1"/>
<dbReference type="EMBL" id="AE004091">
    <property type="protein sequence ID" value="AAG08145.1"/>
    <property type="molecule type" value="Genomic_DNA"/>
</dbReference>
<dbReference type="EMBL" id="U04992">
    <property type="protein sequence ID" value="AAA19045.1"/>
    <property type="molecule type" value="Unassigned_DNA"/>
</dbReference>
<dbReference type="EMBL" id="U81259">
    <property type="protein sequence ID" value="AAB39249.1"/>
    <property type="molecule type" value="Genomic_DNA"/>
</dbReference>
<dbReference type="PIR" id="A55580">
    <property type="entry name" value="A55580"/>
</dbReference>
<dbReference type="PIR" id="H83051">
    <property type="entry name" value="H83051"/>
</dbReference>
<dbReference type="RefSeq" id="NP_253447.1">
    <property type="nucleotide sequence ID" value="NC_002516.2"/>
</dbReference>
<dbReference type="RefSeq" id="WP_003095210.1">
    <property type="nucleotide sequence ID" value="NZ_QZGE01000018.1"/>
</dbReference>
<dbReference type="PDB" id="4YWJ">
    <property type="method" value="X-ray"/>
    <property type="resolution" value="1.80 A"/>
    <property type="chains" value="A/B=1-268"/>
</dbReference>
<dbReference type="PDBsum" id="4YWJ"/>
<dbReference type="SMR" id="P38103"/>
<dbReference type="FunCoup" id="P38103">
    <property type="interactions" value="599"/>
</dbReference>
<dbReference type="STRING" id="208964.PA4759"/>
<dbReference type="PaxDb" id="208964-PA4759"/>
<dbReference type="GeneID" id="881759"/>
<dbReference type="KEGG" id="pae:PA4759"/>
<dbReference type="PATRIC" id="fig|208964.12.peg.4985"/>
<dbReference type="PseudoCAP" id="PA4759"/>
<dbReference type="HOGENOM" id="CLU_047479_2_1_6"/>
<dbReference type="InParanoid" id="P38103"/>
<dbReference type="OrthoDB" id="9790352at2"/>
<dbReference type="PhylomeDB" id="P38103"/>
<dbReference type="BioCyc" id="PAER208964:G1FZ6-4872-MONOMER"/>
<dbReference type="UniPathway" id="UPA00034">
    <property type="reaction ID" value="UER00018"/>
</dbReference>
<dbReference type="EvolutionaryTrace" id="P38103"/>
<dbReference type="Proteomes" id="UP000002438">
    <property type="component" value="Chromosome"/>
</dbReference>
<dbReference type="GO" id="GO:0005829">
    <property type="term" value="C:cytosol"/>
    <property type="evidence" value="ECO:0000318"/>
    <property type="project" value="GO_Central"/>
</dbReference>
<dbReference type="GO" id="GO:0008839">
    <property type="term" value="F:4-hydroxy-tetrahydrodipicolinate reductase"/>
    <property type="evidence" value="ECO:0000318"/>
    <property type="project" value="GO_Central"/>
</dbReference>
<dbReference type="GO" id="GO:0051287">
    <property type="term" value="F:NAD binding"/>
    <property type="evidence" value="ECO:0007669"/>
    <property type="project" value="UniProtKB-UniRule"/>
</dbReference>
<dbReference type="GO" id="GO:0050661">
    <property type="term" value="F:NADP binding"/>
    <property type="evidence" value="ECO:0007669"/>
    <property type="project" value="UniProtKB-UniRule"/>
</dbReference>
<dbReference type="GO" id="GO:0016726">
    <property type="term" value="F:oxidoreductase activity, acting on CH or CH2 groups, NAD or NADP as acceptor"/>
    <property type="evidence" value="ECO:0007669"/>
    <property type="project" value="UniProtKB-UniRule"/>
</dbReference>
<dbReference type="GO" id="GO:0019877">
    <property type="term" value="P:diaminopimelate biosynthetic process"/>
    <property type="evidence" value="ECO:0000318"/>
    <property type="project" value="GO_Central"/>
</dbReference>
<dbReference type="GO" id="GO:0009089">
    <property type="term" value="P:lysine biosynthetic process via diaminopimelate"/>
    <property type="evidence" value="ECO:0007669"/>
    <property type="project" value="UniProtKB-UniRule"/>
</dbReference>
<dbReference type="CDD" id="cd02274">
    <property type="entry name" value="DHDPR_N"/>
    <property type="match status" value="1"/>
</dbReference>
<dbReference type="FunFam" id="3.30.360.10:FF:000004">
    <property type="entry name" value="4-hydroxy-tetrahydrodipicolinate reductase"/>
    <property type="match status" value="1"/>
</dbReference>
<dbReference type="FunFam" id="3.40.50.720:FF:000048">
    <property type="entry name" value="4-hydroxy-tetrahydrodipicolinate reductase"/>
    <property type="match status" value="1"/>
</dbReference>
<dbReference type="Gene3D" id="3.30.360.10">
    <property type="entry name" value="Dihydrodipicolinate Reductase, domain 2"/>
    <property type="match status" value="1"/>
</dbReference>
<dbReference type="Gene3D" id="3.40.50.720">
    <property type="entry name" value="NAD(P)-binding Rossmann-like Domain"/>
    <property type="match status" value="1"/>
</dbReference>
<dbReference type="HAMAP" id="MF_00102">
    <property type="entry name" value="DapB"/>
    <property type="match status" value="1"/>
</dbReference>
<dbReference type="InterPro" id="IPR022663">
    <property type="entry name" value="DapB_C"/>
</dbReference>
<dbReference type="InterPro" id="IPR000846">
    <property type="entry name" value="DapB_N"/>
</dbReference>
<dbReference type="InterPro" id="IPR022664">
    <property type="entry name" value="DapB_N_CS"/>
</dbReference>
<dbReference type="InterPro" id="IPR023940">
    <property type="entry name" value="DHDPR_bac"/>
</dbReference>
<dbReference type="InterPro" id="IPR036291">
    <property type="entry name" value="NAD(P)-bd_dom_sf"/>
</dbReference>
<dbReference type="NCBIfam" id="TIGR00036">
    <property type="entry name" value="dapB"/>
    <property type="match status" value="1"/>
</dbReference>
<dbReference type="PANTHER" id="PTHR20836:SF0">
    <property type="entry name" value="4-HYDROXY-TETRAHYDRODIPICOLINATE REDUCTASE 1, CHLOROPLASTIC-RELATED"/>
    <property type="match status" value="1"/>
</dbReference>
<dbReference type="PANTHER" id="PTHR20836">
    <property type="entry name" value="DIHYDRODIPICOLINATE REDUCTASE"/>
    <property type="match status" value="1"/>
</dbReference>
<dbReference type="Pfam" id="PF05173">
    <property type="entry name" value="DapB_C"/>
    <property type="match status" value="1"/>
</dbReference>
<dbReference type="Pfam" id="PF01113">
    <property type="entry name" value="DapB_N"/>
    <property type="match status" value="1"/>
</dbReference>
<dbReference type="PIRSF" id="PIRSF000161">
    <property type="entry name" value="DHPR"/>
    <property type="match status" value="1"/>
</dbReference>
<dbReference type="SUPFAM" id="SSF55347">
    <property type="entry name" value="Glyceraldehyde-3-phosphate dehydrogenase-like, C-terminal domain"/>
    <property type="match status" value="1"/>
</dbReference>
<dbReference type="SUPFAM" id="SSF51735">
    <property type="entry name" value="NAD(P)-binding Rossmann-fold domains"/>
    <property type="match status" value="1"/>
</dbReference>
<dbReference type="PROSITE" id="PS01298">
    <property type="entry name" value="DAPB"/>
    <property type="match status" value="1"/>
</dbReference>
<keyword id="KW-0002">3D-structure</keyword>
<keyword id="KW-0028">Amino-acid biosynthesis</keyword>
<keyword id="KW-0963">Cytoplasm</keyword>
<keyword id="KW-0220">Diaminopimelate biosynthesis</keyword>
<keyword id="KW-0457">Lysine biosynthesis</keyword>
<keyword id="KW-0520">NAD</keyword>
<keyword id="KW-0521">NADP</keyword>
<keyword id="KW-0560">Oxidoreductase</keyword>
<keyword id="KW-1185">Reference proteome</keyword>
<feature type="chain" id="PRO_0000141468" description="4-hydroxy-tetrahydrodipicolinate reductase">
    <location>
        <begin position="1"/>
        <end position="268"/>
    </location>
</feature>
<feature type="active site" description="Proton donor/acceptor" evidence="1">
    <location>
        <position position="156"/>
    </location>
</feature>
<feature type="active site" description="Proton donor" evidence="1">
    <location>
        <position position="160"/>
    </location>
</feature>
<feature type="binding site" evidence="1">
    <location>
        <begin position="8"/>
        <end position="13"/>
    </location>
    <ligand>
        <name>NAD(+)</name>
        <dbReference type="ChEBI" id="CHEBI:57540"/>
    </ligand>
</feature>
<feature type="binding site" evidence="1">
    <location>
        <position position="35"/>
    </location>
    <ligand>
        <name>NAD(+)</name>
        <dbReference type="ChEBI" id="CHEBI:57540"/>
    </ligand>
</feature>
<feature type="binding site" evidence="1">
    <location>
        <position position="36"/>
    </location>
    <ligand>
        <name>NADP(+)</name>
        <dbReference type="ChEBI" id="CHEBI:58349"/>
    </ligand>
</feature>
<feature type="binding site" evidence="1">
    <location>
        <begin position="99"/>
        <end position="101"/>
    </location>
    <ligand>
        <name>NAD(+)</name>
        <dbReference type="ChEBI" id="CHEBI:57540"/>
    </ligand>
</feature>
<feature type="binding site" evidence="1">
    <location>
        <begin position="123"/>
        <end position="126"/>
    </location>
    <ligand>
        <name>NAD(+)</name>
        <dbReference type="ChEBI" id="CHEBI:57540"/>
    </ligand>
</feature>
<feature type="binding site" evidence="1">
    <location>
        <position position="157"/>
    </location>
    <ligand>
        <name>(S)-2,3,4,5-tetrahydrodipicolinate</name>
        <dbReference type="ChEBI" id="CHEBI:16845"/>
    </ligand>
</feature>
<feature type="binding site" evidence="1">
    <location>
        <begin position="166"/>
        <end position="167"/>
    </location>
    <ligand>
        <name>(S)-2,3,4,5-tetrahydrodipicolinate</name>
        <dbReference type="ChEBI" id="CHEBI:16845"/>
    </ligand>
</feature>
<feature type="strand" evidence="3">
    <location>
        <begin position="2"/>
        <end position="8"/>
    </location>
</feature>
<feature type="helix" evidence="3">
    <location>
        <begin position="12"/>
        <end position="22"/>
    </location>
</feature>
<feature type="strand" evidence="3">
    <location>
        <begin position="26"/>
        <end position="34"/>
    </location>
</feature>
<feature type="turn" evidence="3">
    <location>
        <begin position="40"/>
        <end position="43"/>
    </location>
</feature>
<feature type="helix" evidence="3">
    <location>
        <begin position="46"/>
        <end position="49"/>
    </location>
</feature>
<feature type="strand" evidence="3">
    <location>
        <begin position="58"/>
        <end position="61"/>
    </location>
</feature>
<feature type="helix" evidence="3">
    <location>
        <begin position="63"/>
        <end position="66"/>
    </location>
</feature>
<feature type="strand" evidence="3">
    <location>
        <begin position="71"/>
        <end position="75"/>
    </location>
</feature>
<feature type="helix" evidence="3">
    <location>
        <begin position="79"/>
        <end position="91"/>
    </location>
</feature>
<feature type="strand" evidence="3">
    <location>
        <begin position="95"/>
        <end position="98"/>
    </location>
</feature>
<feature type="helix" evidence="3">
    <location>
        <begin position="105"/>
        <end position="114"/>
    </location>
</feature>
<feature type="turn" evidence="3">
    <location>
        <begin position="115"/>
        <end position="117"/>
    </location>
</feature>
<feature type="strand" evidence="3">
    <location>
        <begin position="118"/>
        <end position="122"/>
    </location>
</feature>
<feature type="helix" evidence="3">
    <location>
        <begin position="128"/>
        <end position="144"/>
    </location>
</feature>
<feature type="helix" evidence="3">
    <location>
        <begin position="145"/>
        <end position="147"/>
    </location>
</feature>
<feature type="strand" evidence="3">
    <location>
        <begin position="148"/>
        <end position="156"/>
    </location>
</feature>
<feature type="strand" evidence="3">
    <location>
        <begin position="162"/>
        <end position="164"/>
    </location>
</feature>
<feature type="helix" evidence="3">
    <location>
        <begin position="166"/>
        <end position="178"/>
    </location>
</feature>
<feature type="helix" evidence="3">
    <location>
        <begin position="183"/>
        <end position="186"/>
    </location>
</feature>
<feature type="strand" evidence="3">
    <location>
        <begin position="203"/>
        <end position="209"/>
    </location>
</feature>
<feature type="strand" evidence="3">
    <location>
        <begin position="215"/>
        <end position="223"/>
    </location>
</feature>
<feature type="strand" evidence="3">
    <location>
        <begin position="226"/>
        <end position="234"/>
    </location>
</feature>
<feature type="helix" evidence="3">
    <location>
        <begin position="238"/>
        <end position="250"/>
    </location>
</feature>
<feature type="turn" evidence="3">
    <location>
        <begin position="251"/>
        <end position="253"/>
    </location>
</feature>
<feature type="strand" evidence="3">
    <location>
        <begin position="256"/>
        <end position="259"/>
    </location>
</feature>
<feature type="helix" evidence="3">
    <location>
        <begin position="261"/>
        <end position="264"/>
    </location>
</feature>
<sequence>MRRIAVVGAAGRMGKNLIEAVQQTGGAAGLTAAVDRPDSTLVGADAGELAGLGRIGVPLSGDLGKVCEEFDVLIDFTHPSVTLKNIEQCRKARRAMVIGTTGFSADEKLLLAEAAKDIPIVFAANFSVGVNLCLKLLDTAARVLGDEVDIEIIEAHHRHKVDAPSGTALRMGEVVAQALGRDLQEVAVYGREGQTGARARETIGFATVRAGDVVGDHTVLFAAEGERVEITHKASSRMTFARGAVRAALWLEGKENGLYDMQDVLGLR</sequence>
<accession>P38103</accession>
<protein>
    <recommendedName>
        <fullName evidence="1">4-hydroxy-tetrahydrodipicolinate reductase</fullName>
        <shortName evidence="1">HTPA reductase</shortName>
        <ecNumber evidence="1">1.17.1.8</ecNumber>
    </recommendedName>
</protein>
<gene>
    <name evidence="1" type="primary">dapB</name>
    <name type="ordered locus">PA4759</name>
</gene>
<proteinExistence type="evidence at protein level"/>
<reference key="1">
    <citation type="journal article" date="2000" name="Nature">
        <title>Complete genome sequence of Pseudomonas aeruginosa PAO1, an opportunistic pathogen.</title>
        <authorList>
            <person name="Stover C.K."/>
            <person name="Pham X.-Q.T."/>
            <person name="Erwin A.L."/>
            <person name="Mizoguchi S.D."/>
            <person name="Warrener P."/>
            <person name="Hickey M.J."/>
            <person name="Brinkman F.S.L."/>
            <person name="Hufnagle W.O."/>
            <person name="Kowalik D.J."/>
            <person name="Lagrou M."/>
            <person name="Garber R.L."/>
            <person name="Goltry L."/>
            <person name="Tolentino E."/>
            <person name="Westbrock-Wadman S."/>
            <person name="Yuan Y."/>
            <person name="Brody L.L."/>
            <person name="Coulter S.N."/>
            <person name="Folger K.R."/>
            <person name="Kas A."/>
            <person name="Larbig K."/>
            <person name="Lim R.M."/>
            <person name="Smith K.A."/>
            <person name="Spencer D.H."/>
            <person name="Wong G.K.-S."/>
            <person name="Wu Z."/>
            <person name="Paulsen I.T."/>
            <person name="Reizer J."/>
            <person name="Saier M.H. Jr."/>
            <person name="Hancock R.E.W."/>
            <person name="Lory S."/>
            <person name="Olson M.V."/>
        </authorList>
    </citation>
    <scope>NUCLEOTIDE SEQUENCE [LARGE SCALE GENOMIC DNA]</scope>
    <source>
        <strain>ATCC 15692 / DSM 22644 / CIP 104116 / JCM 14847 / LMG 12228 / 1C / PRS 101 / PAO1</strain>
    </source>
</reference>
<reference key="2">
    <citation type="journal article" date="1994" name="J. Bacteriol.">
        <title>Structure and regulation of the carAB operon in Pseudomonas aeruginosa and Pseudomonas stutzeri: no untranslated region exists.</title>
        <authorList>
            <person name="Kwon D.-H."/>
            <person name="Lu C.-D."/>
            <person name="Walthall D.A."/>
            <person name="Brown T.M."/>
            <person name="Houghton J.E."/>
            <person name="Abdelal A.T."/>
        </authorList>
    </citation>
    <scope>NUCLEOTIDE SEQUENCE [GENOMIC DNA] OF 135-268</scope>
    <source>
        <strain>ATCC 15692 / DSM 22644 / CIP 104116 / JCM 14847 / LMG 12228 / 1C / PRS 101 / PAO1</strain>
    </source>
</reference>
<name>DAPB_PSEAE</name>